<sequence>MASRASWEYHGASQQSQGALLVQFSNGTIQSPESVNFTLYGNKDDKNPKTKRQKILAAETDRLNYVGNNFSSDTLKCSSLCRYFVGVLNKETGKMEVYDAEQFKMQPILKSGMENELHTEDIVDQPTKSYREKVDALIESFGTNKQKRALSSRKLNQVGSDILNKAMAKAAEEIIESRGTTELIKDAAEKREQDTSLFLPPCDFNADKPENAYKFDNLISPVEYAALETASAALRNITSEGLQQMVEEKKSGLFVLQELHGLREIKDEKALDHQARCLWYLDALIKLSQLRTVKRKDILTPECPSVVCWKLMKNFTVETYKNGRIQNAISGTTKTKIVAYIIAIALHICDFQVDLTLLQRDMKLKESRILEIAKVMGLKIKKRMMYSESSIEEGHKIGLLTIPLTVYKPSGGELKRKKM</sequence>
<gene>
    <name type="primary">polr1e</name>
    <name type="synonym">paf53</name>
    <name type="synonym">praf1</name>
</gene>
<organism>
    <name type="scientific">Xenopus laevis</name>
    <name type="common">African clawed frog</name>
    <dbReference type="NCBI Taxonomy" id="8355"/>
    <lineage>
        <taxon>Eukaryota</taxon>
        <taxon>Metazoa</taxon>
        <taxon>Chordata</taxon>
        <taxon>Craniata</taxon>
        <taxon>Vertebrata</taxon>
        <taxon>Euteleostomi</taxon>
        <taxon>Amphibia</taxon>
        <taxon>Batrachia</taxon>
        <taxon>Anura</taxon>
        <taxon>Pipoidea</taxon>
        <taxon>Pipidae</taxon>
        <taxon>Xenopodinae</taxon>
        <taxon>Xenopus</taxon>
        <taxon>Xenopus</taxon>
    </lineage>
</organism>
<proteinExistence type="evidence at transcript level"/>
<comment type="function">
    <text evidence="1">DNA-dependent RNA polymerase catalyzes the transcription of DNA into RNA using the four ribonucleoside triphosphates as substrates. Component of RNA polymerase I which synthesizes ribosomal RNA precursors. Appears to be involved in the formation of the initiation complex at the promoter by mediating the interaction between Pol I and UBTF/UBF.</text>
</comment>
<comment type="subunit">
    <text evidence="1">Component of the RNA polymerase I (Pol I) complex consisting of at least 13 subunits.</text>
</comment>
<comment type="subcellular location">
    <subcellularLocation>
        <location evidence="1">Nucleus</location>
        <location evidence="1">Nucleolus</location>
    </subcellularLocation>
</comment>
<comment type="similarity">
    <text evidence="2">Belongs to the eukaryotic RPA49/POLR1E RNA polymerase subunit family.</text>
</comment>
<keyword id="KW-0240">DNA-directed RNA polymerase</keyword>
<keyword id="KW-0539">Nucleus</keyword>
<keyword id="KW-1185">Reference proteome</keyword>
<keyword id="KW-0804">Transcription</keyword>
<protein>
    <recommendedName>
        <fullName>DNA-directed RNA polymerase I subunit RPA49</fullName>
        <shortName>RNA polymerase I subunit A49</shortName>
    </recommendedName>
    <alternativeName>
        <fullName>DNA-directed RNA polymerase I subunit E</fullName>
    </alternativeName>
    <alternativeName>
        <fullName>RNA polymerase I-associated factor 1</fullName>
    </alternativeName>
    <alternativeName>
        <fullName>RNA polymerase I-associated factor 53</fullName>
    </alternativeName>
</protein>
<accession>Q6GLI9</accession>
<evidence type="ECO:0000250" key="1">
    <source>
        <dbReference type="UniProtKB" id="Q9GZS1"/>
    </source>
</evidence>
<evidence type="ECO:0000305" key="2"/>
<feature type="chain" id="PRO_0000073958" description="DNA-directed RNA polymerase I subunit RPA49">
    <location>
        <begin position="1"/>
        <end position="419"/>
    </location>
</feature>
<dbReference type="EMBL" id="BC074496">
    <property type="protein sequence ID" value="AAH74496.1"/>
    <property type="molecule type" value="mRNA"/>
</dbReference>
<dbReference type="RefSeq" id="NP_001086330.1">
    <property type="nucleotide sequence ID" value="NM_001092861.1"/>
</dbReference>
<dbReference type="SMR" id="Q6GLI9"/>
<dbReference type="BioGRID" id="102922">
    <property type="interactions" value="1"/>
</dbReference>
<dbReference type="IntAct" id="Q6GLI9">
    <property type="interactions" value="1"/>
</dbReference>
<dbReference type="DNASU" id="444759"/>
<dbReference type="GeneID" id="444759"/>
<dbReference type="KEGG" id="xla:444759"/>
<dbReference type="AGR" id="Xenbase:XB-GENE-1003655"/>
<dbReference type="CTD" id="444759"/>
<dbReference type="Xenbase" id="XB-GENE-1003655">
    <property type="gene designation" value="polr1e.L"/>
</dbReference>
<dbReference type="OMA" id="DVYPFDE"/>
<dbReference type="OrthoDB" id="532500at2759"/>
<dbReference type="CD-CODE" id="AC502520">
    <property type="entry name" value="Nucleolus"/>
</dbReference>
<dbReference type="Proteomes" id="UP000186698">
    <property type="component" value="Chromosome 1L"/>
</dbReference>
<dbReference type="Bgee" id="444759">
    <property type="expression patterns" value="Expressed in gastrula and 19 other cell types or tissues"/>
</dbReference>
<dbReference type="GO" id="GO:0005736">
    <property type="term" value="C:RNA polymerase I complex"/>
    <property type="evidence" value="ECO:0000318"/>
    <property type="project" value="GO_Central"/>
</dbReference>
<dbReference type="GO" id="GO:0003677">
    <property type="term" value="F:DNA binding"/>
    <property type="evidence" value="ECO:0007669"/>
    <property type="project" value="InterPro"/>
</dbReference>
<dbReference type="GO" id="GO:0001188">
    <property type="term" value="P:RNA polymerase I preinitiation complex assembly"/>
    <property type="evidence" value="ECO:0000318"/>
    <property type="project" value="GO_Central"/>
</dbReference>
<dbReference type="GO" id="GO:0006362">
    <property type="term" value="P:transcription elongation by RNA polymerase I"/>
    <property type="evidence" value="ECO:0000318"/>
    <property type="project" value="GO_Central"/>
</dbReference>
<dbReference type="InterPro" id="IPR009668">
    <property type="entry name" value="RNA_pol-assoc_fac_A49-like"/>
</dbReference>
<dbReference type="PANTHER" id="PTHR14440">
    <property type="entry name" value="DNA-DIRECTED RNA POLYMERASE I SUBUNIT RPA49"/>
    <property type="match status" value="1"/>
</dbReference>
<dbReference type="Pfam" id="PF06870">
    <property type="entry name" value="RNA_pol_I_A49"/>
    <property type="match status" value="1"/>
</dbReference>
<reference key="1">
    <citation type="submission" date="2004-06" db="EMBL/GenBank/DDBJ databases">
        <authorList>
            <consortium name="NIH - Xenopus Gene Collection (XGC) project"/>
        </authorList>
    </citation>
    <scope>NUCLEOTIDE SEQUENCE [LARGE SCALE MRNA]</scope>
    <source>
        <tissue>Brain</tissue>
    </source>
</reference>
<name>RPA49_XENLA</name>